<gene>
    <name type="primary">dad4</name>
    <name type="ORF">SPBC3B9.22c</name>
</gene>
<proteinExistence type="evidence at protein level"/>
<feature type="chain" id="PRO_0000176051" description="DASH complex subunit dad4">
    <location>
        <begin position="1"/>
        <end position="72"/>
    </location>
</feature>
<feature type="coiled-coil region" evidence="2">
    <location>
        <begin position="15"/>
        <end position="35"/>
    </location>
</feature>
<dbReference type="EMBL" id="CU329671">
    <property type="protein sequence ID" value="CAI94506.2"/>
    <property type="molecule type" value="Genomic_DNA"/>
</dbReference>
<dbReference type="RefSeq" id="XP_001713149.1">
    <property type="nucleotide sequence ID" value="XM_001713097.2"/>
</dbReference>
<dbReference type="SMR" id="Q50HP4"/>
<dbReference type="BioGRID" id="857966">
    <property type="interactions" value="126"/>
</dbReference>
<dbReference type="ComplexPortal" id="CPX-10081">
    <property type="entry name" value="DASH complex"/>
</dbReference>
<dbReference type="FunCoup" id="Q50HP4">
    <property type="interactions" value="8"/>
</dbReference>
<dbReference type="STRING" id="284812.Q50HP4"/>
<dbReference type="iPTMnet" id="Q50HP4"/>
<dbReference type="PaxDb" id="4896-SPBC3B9.22c.1"/>
<dbReference type="EnsemblFungi" id="SPBC3B9.22c.1">
    <property type="protein sequence ID" value="SPBC3B9.22c.1:pep"/>
    <property type="gene ID" value="SPBC3B9.22c"/>
</dbReference>
<dbReference type="PomBase" id="SPBC3B9.22c">
    <property type="gene designation" value="dad4"/>
</dbReference>
<dbReference type="VEuPathDB" id="FungiDB:SPBC3B9.22c"/>
<dbReference type="eggNOG" id="ENOG502S890">
    <property type="taxonomic scope" value="Eukaryota"/>
</dbReference>
<dbReference type="HOGENOM" id="CLU_177920_1_1_1"/>
<dbReference type="InParanoid" id="Q50HP4"/>
<dbReference type="OMA" id="SQMWANY"/>
<dbReference type="PhylomeDB" id="Q50HP4"/>
<dbReference type="PRO" id="PR:Q50HP4"/>
<dbReference type="Proteomes" id="UP000002485">
    <property type="component" value="Chromosome II"/>
</dbReference>
<dbReference type="GO" id="GO:0005737">
    <property type="term" value="C:cytoplasm"/>
    <property type="evidence" value="ECO:0007669"/>
    <property type="project" value="UniProtKB-KW"/>
</dbReference>
<dbReference type="GO" id="GO:0042729">
    <property type="term" value="C:DASH complex"/>
    <property type="evidence" value="ECO:0000314"/>
    <property type="project" value="PomBase"/>
</dbReference>
<dbReference type="GO" id="GO:0005874">
    <property type="term" value="C:microtubule"/>
    <property type="evidence" value="ECO:0007669"/>
    <property type="project" value="UniProtKB-KW"/>
</dbReference>
<dbReference type="GO" id="GO:0072686">
    <property type="term" value="C:mitotic spindle"/>
    <property type="evidence" value="ECO:0007669"/>
    <property type="project" value="InterPro"/>
</dbReference>
<dbReference type="GO" id="GO:0008608">
    <property type="term" value="P:attachment of spindle microtubules to kinetochore"/>
    <property type="evidence" value="ECO:0000250"/>
    <property type="project" value="UniProtKB"/>
</dbReference>
<dbReference type="GO" id="GO:0051301">
    <property type="term" value="P:cell division"/>
    <property type="evidence" value="ECO:0007669"/>
    <property type="project" value="UniProtKB-KW"/>
</dbReference>
<dbReference type="GO" id="GO:1990758">
    <property type="term" value="P:mitotic sister chromatid biorientation"/>
    <property type="evidence" value="ECO:0000269"/>
    <property type="project" value="UniProtKB"/>
</dbReference>
<dbReference type="GO" id="GO:1990976">
    <property type="term" value="P:protein transport along microtubule to mitotic spindle pole body"/>
    <property type="evidence" value="ECO:0000250"/>
    <property type="project" value="UniProtKB"/>
</dbReference>
<dbReference type="GO" id="GO:0051455">
    <property type="term" value="P:spindle attachment to meiosis I kinetochore"/>
    <property type="evidence" value="ECO:0000305"/>
    <property type="project" value="PomBase"/>
</dbReference>
<dbReference type="InterPro" id="IPR013959">
    <property type="entry name" value="DASH_Dad4"/>
</dbReference>
<dbReference type="PANTHER" id="PTHR28222">
    <property type="entry name" value="DASH COMPLEX SUBUNIT DAD4"/>
    <property type="match status" value="1"/>
</dbReference>
<dbReference type="PANTHER" id="PTHR28222:SF1">
    <property type="entry name" value="DASH COMPLEX SUBUNIT DAD4"/>
    <property type="match status" value="1"/>
</dbReference>
<dbReference type="Pfam" id="PF08650">
    <property type="entry name" value="DASH_Dad4"/>
    <property type="match status" value="1"/>
</dbReference>
<organism>
    <name type="scientific">Schizosaccharomyces pombe (strain 972 / ATCC 24843)</name>
    <name type="common">Fission yeast</name>
    <dbReference type="NCBI Taxonomy" id="284812"/>
    <lineage>
        <taxon>Eukaryota</taxon>
        <taxon>Fungi</taxon>
        <taxon>Dikarya</taxon>
        <taxon>Ascomycota</taxon>
        <taxon>Taphrinomycotina</taxon>
        <taxon>Schizosaccharomycetes</taxon>
        <taxon>Schizosaccharomycetales</taxon>
        <taxon>Schizosaccharomycetaceae</taxon>
        <taxon>Schizosaccharomyces</taxon>
    </lineage>
</organism>
<keyword id="KW-0131">Cell cycle</keyword>
<keyword id="KW-0132">Cell division</keyword>
<keyword id="KW-0137">Centromere</keyword>
<keyword id="KW-0158">Chromosome</keyword>
<keyword id="KW-0159">Chromosome partition</keyword>
<keyword id="KW-0175">Coiled coil</keyword>
<keyword id="KW-0963">Cytoplasm</keyword>
<keyword id="KW-0206">Cytoskeleton</keyword>
<keyword id="KW-0995">Kinetochore</keyword>
<keyword id="KW-0493">Microtubule</keyword>
<keyword id="KW-0498">Mitosis</keyword>
<keyword id="KW-0539">Nucleus</keyword>
<keyword id="KW-1185">Reference proteome</keyword>
<accession>Q50HP4</accession>
<sequence>MNNPMEEQQSALLGRIISNVEKLNESITRLNHSLQLINMSNMNVELASQMWANYARNVKFHLEETHTLKDPI</sequence>
<comment type="function">
    <text evidence="3 4 5">Component of the DASH complex that connects microtubules with kinetochores and couples microtubule depolymerisation to chromosome movement; it is involved in retrieving kinetochores to the spindle poles before their re-orientation on the spindle in early mitosis and allows microtubule depolymerization to pull chromosomes apart and resist detachment during anaphase (PubMed:16079914, PubMed:20624975). Kinetochores, consisting of a centromere-associated inner segment and a microtubule-contacting outer segment, play a crucial role in chromosome segregation by mediating the physical connection between centromeric DNA and microtubules (PubMed:16079914, PubMed:20624975). Kinetochores also serve as an input point for the spindle assembly checkpoint, which delays anaphase until all chromosomes have bioriented on the mitotic spindle (PubMed:16079914). The DASH complex mediates bipolar kinetochore-microtubule attachments and facilitates the formation of additional interactions between outer kinetochore components and spindle microtubules (PubMed:16079914). During chromosome movement along the microtubule, it is required both for the sliding of kinetochores along the lateral side of the microtubule and also for microtubule end-on pulling on the kinetochore (PubMed:18256284). Modulates cytoplasmic microtubule dynamics by tracking the plus-end of shortening microtubules and slowing their depolymerization (PubMed:20624975).</text>
</comment>
<comment type="subunit">
    <text evidence="1 3 5">Component of the DASH complex consisting of ask1, dad1, dad2, dad3, dad4, dam1, duo1, dad5, spc19 and spc34, with a stoichiometry of one copy of each subunit per complex (PubMed:16079914). Multiple DASH complexes oligomerize to form a ring that encircles spindle microtubules and organizes the rod-like NDC80 complexes of the outer kinetochore (By similarity). DASH complex oligomerization strengthens microtubule attachments (By similarity). On cytoplasmic microtubules, DASH complexes appear to form patches instead of rings (PubMed:20624975).</text>
</comment>
<comment type="subcellular location">
    <subcellularLocation>
        <location evidence="1">Nucleus</location>
    </subcellularLocation>
    <subcellularLocation>
        <location evidence="1">Cytoplasm</location>
        <location evidence="1">Cytoskeleton</location>
        <location evidence="1">Spindle</location>
    </subcellularLocation>
    <subcellularLocation>
        <location evidence="1">Chromosome</location>
        <location evidence="1">Centromere</location>
        <location evidence="1">Kinetochore</location>
    </subcellularLocation>
    <subcellularLocation>
        <location evidence="7">Cytoplasm</location>
        <location evidence="7">Cytoskeleton</location>
    </subcellularLocation>
    <text evidence="1 7">Associates with the mitotic spindle and the kinetochore. Kinetochore association occurs only during mitosis (By similarity). In the cytoskeleton, localizes to cortical microtubules (Probable).</text>
</comment>
<comment type="similarity">
    <text evidence="6">Belongs to the DASH complex DAD4 family.</text>
</comment>
<protein>
    <recommendedName>
        <fullName>DASH complex subunit dad4</fullName>
    </recommendedName>
    <alternativeName>
        <fullName>Outer kinetochore protein dad4</fullName>
    </alternativeName>
</protein>
<reference key="1">
    <citation type="journal article" date="2002" name="Nature">
        <title>The genome sequence of Schizosaccharomyces pombe.</title>
        <authorList>
            <person name="Wood V."/>
            <person name="Gwilliam R."/>
            <person name="Rajandream M.A."/>
            <person name="Lyne M.H."/>
            <person name="Lyne R."/>
            <person name="Stewart A."/>
            <person name="Sgouros J.G."/>
            <person name="Peat N."/>
            <person name="Hayles J."/>
            <person name="Baker S.G."/>
            <person name="Basham D."/>
            <person name="Bowman S."/>
            <person name="Brooks K."/>
            <person name="Brown D."/>
            <person name="Brown S."/>
            <person name="Chillingworth T."/>
            <person name="Churcher C.M."/>
            <person name="Collins M."/>
            <person name="Connor R."/>
            <person name="Cronin A."/>
            <person name="Davis P."/>
            <person name="Feltwell T."/>
            <person name="Fraser A."/>
            <person name="Gentles S."/>
            <person name="Goble A."/>
            <person name="Hamlin N."/>
            <person name="Harris D.E."/>
            <person name="Hidalgo J."/>
            <person name="Hodgson G."/>
            <person name="Holroyd S."/>
            <person name="Hornsby T."/>
            <person name="Howarth S."/>
            <person name="Huckle E.J."/>
            <person name="Hunt S."/>
            <person name="Jagels K."/>
            <person name="James K.D."/>
            <person name="Jones L."/>
            <person name="Jones M."/>
            <person name="Leather S."/>
            <person name="McDonald S."/>
            <person name="McLean J."/>
            <person name="Mooney P."/>
            <person name="Moule S."/>
            <person name="Mungall K.L."/>
            <person name="Murphy L.D."/>
            <person name="Niblett D."/>
            <person name="Odell C."/>
            <person name="Oliver K."/>
            <person name="O'Neil S."/>
            <person name="Pearson D."/>
            <person name="Quail M.A."/>
            <person name="Rabbinowitsch E."/>
            <person name="Rutherford K.M."/>
            <person name="Rutter S."/>
            <person name="Saunders D."/>
            <person name="Seeger K."/>
            <person name="Sharp S."/>
            <person name="Skelton J."/>
            <person name="Simmonds M.N."/>
            <person name="Squares R."/>
            <person name="Squares S."/>
            <person name="Stevens K."/>
            <person name="Taylor K."/>
            <person name="Taylor R.G."/>
            <person name="Tivey A."/>
            <person name="Walsh S.V."/>
            <person name="Warren T."/>
            <person name="Whitehead S."/>
            <person name="Woodward J.R."/>
            <person name="Volckaert G."/>
            <person name="Aert R."/>
            <person name="Robben J."/>
            <person name="Grymonprez B."/>
            <person name="Weltjens I."/>
            <person name="Vanstreels E."/>
            <person name="Rieger M."/>
            <person name="Schaefer M."/>
            <person name="Mueller-Auer S."/>
            <person name="Gabel C."/>
            <person name="Fuchs M."/>
            <person name="Duesterhoeft A."/>
            <person name="Fritzc C."/>
            <person name="Holzer E."/>
            <person name="Moestl D."/>
            <person name="Hilbert H."/>
            <person name="Borzym K."/>
            <person name="Langer I."/>
            <person name="Beck A."/>
            <person name="Lehrach H."/>
            <person name="Reinhardt R."/>
            <person name="Pohl T.M."/>
            <person name="Eger P."/>
            <person name="Zimmermann W."/>
            <person name="Wedler H."/>
            <person name="Wambutt R."/>
            <person name="Purnelle B."/>
            <person name="Goffeau A."/>
            <person name="Cadieu E."/>
            <person name="Dreano S."/>
            <person name="Gloux S."/>
            <person name="Lelaure V."/>
            <person name="Mottier S."/>
            <person name="Galibert F."/>
            <person name="Aves S.J."/>
            <person name="Xiang Z."/>
            <person name="Hunt C."/>
            <person name="Moore K."/>
            <person name="Hurst S.M."/>
            <person name="Lucas M."/>
            <person name="Rochet M."/>
            <person name="Gaillardin C."/>
            <person name="Tallada V.A."/>
            <person name="Garzon A."/>
            <person name="Thode G."/>
            <person name="Daga R.R."/>
            <person name="Cruzado L."/>
            <person name="Jimenez J."/>
            <person name="Sanchez M."/>
            <person name="del Rey F."/>
            <person name="Benito J."/>
            <person name="Dominguez A."/>
            <person name="Revuelta J.L."/>
            <person name="Moreno S."/>
            <person name="Armstrong J."/>
            <person name="Forsburg S.L."/>
            <person name="Cerutti L."/>
            <person name="Lowe T."/>
            <person name="McCombie W.R."/>
            <person name="Paulsen I."/>
            <person name="Potashkin J."/>
            <person name="Shpakovski G.V."/>
            <person name="Ussery D."/>
            <person name="Barrell B.G."/>
            <person name="Nurse P."/>
        </authorList>
    </citation>
    <scope>NUCLEOTIDE SEQUENCE [LARGE SCALE GENOMIC DNA]</scope>
    <source>
        <strain>972 / ATCC 24843</strain>
    </source>
</reference>
<reference key="2">
    <citation type="journal article" date="2005" name="EMBO J.">
        <title>Molecular analysis of kinetochore architecture in fission yeast.</title>
        <authorList>
            <person name="Liu X."/>
            <person name="McLeod I."/>
            <person name="Anderson S."/>
            <person name="Yates J.R. III"/>
            <person name="He X."/>
        </authorList>
    </citation>
    <scope>FUNCTION</scope>
    <scope>IDENTIFICATION IN THE DASH COMPLEX</scope>
</reference>
<reference key="3">
    <citation type="journal article" date="2008" name="Mol. Biol. Cell">
        <title>Sister kinetochore recapture in fission yeast occurs by two distinct mechanisms, both requiring Dam1 and Klp2.</title>
        <authorList>
            <person name="Gachet Y."/>
            <person name="Reyes C."/>
            <person name="Courtheoux T."/>
            <person name="Goldstone S."/>
            <person name="Gay G."/>
            <person name="Serrurier C."/>
            <person name="Tournier S."/>
        </authorList>
    </citation>
    <scope>FUNCTION</scope>
</reference>
<reference key="4">
    <citation type="journal article" date="2010" name="Proc. Natl. Acad. Sci. U.S.A.">
        <title>A non-ring-like form of the Dam1 complex modulates microtubule dynamics in fission yeast.</title>
        <authorList>
            <person name="Gao Q."/>
            <person name="Courtheoux T."/>
            <person name="Gachet Y."/>
            <person name="Tournier S."/>
            <person name="He X."/>
        </authorList>
    </citation>
    <scope>FUNCTION</scope>
    <scope>SUBUNIT</scope>
    <scope>SUBCELLULAR LOCATION</scope>
</reference>
<evidence type="ECO:0000250" key="1">
    <source>
        <dbReference type="UniProtKB" id="P69851"/>
    </source>
</evidence>
<evidence type="ECO:0000255" key="2"/>
<evidence type="ECO:0000269" key="3">
    <source>
    </source>
</evidence>
<evidence type="ECO:0000269" key="4">
    <source>
    </source>
</evidence>
<evidence type="ECO:0000269" key="5">
    <source>
    </source>
</evidence>
<evidence type="ECO:0000305" key="6"/>
<evidence type="ECO:0000305" key="7">
    <source>
    </source>
</evidence>
<name>DAD4_SCHPO</name>